<reference key="1">
    <citation type="journal article" date="1998" name="J. Virol.">
        <title>The human homolog of HAVcr-1 codes for a hepatitis A virus cellular receptor.</title>
        <authorList>
            <person name="Feigelstock D."/>
            <person name="Thompson P."/>
            <person name="Mattoo P."/>
            <person name="Zhang Y."/>
            <person name="Kaplan G.G."/>
        </authorList>
    </citation>
    <scope>NUCLEOTIDE SEQUENCE [MRNA]</scope>
    <scope>TISSUE SPECIFICITY</scope>
    <scope>FUNCTION (MICROBIAL INFECTION)</scope>
    <scope>INTERACTION WITH HEPATITIS A VIRUS CAPSID PROTEINS (MICROBIAL INFECTION)</scope>
    <scope>VARIANT 157-PRO--VAL-161 DEL</scope>
    <source>
        <tissue>Liver</tissue>
    </source>
</reference>
<reference key="2">
    <citation type="submission" date="2004-06" db="EMBL/GenBank/DDBJ databases">
        <title>Cloning of human full open reading frames in Gateway(TM) system entry vector (pDONR201).</title>
        <authorList>
            <person name="Ebert L."/>
            <person name="Schick M."/>
            <person name="Neubert P."/>
            <person name="Schatten R."/>
            <person name="Henze S."/>
            <person name="Korn B."/>
        </authorList>
    </citation>
    <scope>NUCLEOTIDE SEQUENCE [LARGE SCALE MRNA]</scope>
</reference>
<reference key="3">
    <citation type="journal article" date="2004" name="Nature">
        <title>The DNA sequence and comparative analysis of human chromosome 5.</title>
        <authorList>
            <person name="Schmutz J."/>
            <person name="Martin J."/>
            <person name="Terry A."/>
            <person name="Couronne O."/>
            <person name="Grimwood J."/>
            <person name="Lowry S."/>
            <person name="Gordon L.A."/>
            <person name="Scott D."/>
            <person name="Xie G."/>
            <person name="Huang W."/>
            <person name="Hellsten U."/>
            <person name="Tran-Gyamfi M."/>
            <person name="She X."/>
            <person name="Prabhakar S."/>
            <person name="Aerts A."/>
            <person name="Altherr M."/>
            <person name="Bajorek E."/>
            <person name="Black S."/>
            <person name="Branscomb E."/>
            <person name="Caoile C."/>
            <person name="Challacombe J.F."/>
            <person name="Chan Y.M."/>
            <person name="Denys M."/>
            <person name="Detter J.C."/>
            <person name="Escobar J."/>
            <person name="Flowers D."/>
            <person name="Fotopulos D."/>
            <person name="Glavina T."/>
            <person name="Gomez M."/>
            <person name="Gonzales E."/>
            <person name="Goodstein D."/>
            <person name="Grigoriev I."/>
            <person name="Groza M."/>
            <person name="Hammon N."/>
            <person name="Hawkins T."/>
            <person name="Haydu L."/>
            <person name="Israni S."/>
            <person name="Jett J."/>
            <person name="Kadner K."/>
            <person name="Kimball H."/>
            <person name="Kobayashi A."/>
            <person name="Lopez F."/>
            <person name="Lou Y."/>
            <person name="Martinez D."/>
            <person name="Medina C."/>
            <person name="Morgan J."/>
            <person name="Nandkeshwar R."/>
            <person name="Noonan J.P."/>
            <person name="Pitluck S."/>
            <person name="Pollard M."/>
            <person name="Predki P."/>
            <person name="Priest J."/>
            <person name="Ramirez L."/>
            <person name="Retterer J."/>
            <person name="Rodriguez A."/>
            <person name="Rogers S."/>
            <person name="Salamov A."/>
            <person name="Salazar A."/>
            <person name="Thayer N."/>
            <person name="Tice H."/>
            <person name="Tsai M."/>
            <person name="Ustaszewska A."/>
            <person name="Vo N."/>
            <person name="Wheeler J."/>
            <person name="Wu K."/>
            <person name="Yang J."/>
            <person name="Dickson M."/>
            <person name="Cheng J.-F."/>
            <person name="Eichler E.E."/>
            <person name="Olsen A."/>
            <person name="Pennacchio L.A."/>
            <person name="Rokhsar D.S."/>
            <person name="Richardson P."/>
            <person name="Lucas S.M."/>
            <person name="Myers R.M."/>
            <person name="Rubin E.M."/>
        </authorList>
    </citation>
    <scope>NUCLEOTIDE SEQUENCE [LARGE SCALE GENOMIC DNA]</scope>
</reference>
<reference key="4">
    <citation type="journal article" date="2004" name="Genome Res.">
        <title>The status, quality, and expansion of the NIH full-length cDNA project: the Mammalian Gene Collection (MGC).</title>
        <authorList>
            <consortium name="The MGC Project Team"/>
        </authorList>
    </citation>
    <scope>NUCLEOTIDE SEQUENCE [LARGE SCALE MRNA]</scope>
    <source>
        <tissue>Kidney</tissue>
    </source>
</reference>
<reference key="5">
    <citation type="journal article" date="2007" name="J. Virol.">
        <title>Immunoglobulin A (IgA) is a natural ligand of hepatitis A virus cellular receptor 1 (HAVCR1), and the association of IgA with HAVCR1 enhances virus-receptor interactions.</title>
        <authorList>
            <person name="Tami C."/>
            <person name="Silberstein E."/>
            <person name="Manangeeswaran M."/>
            <person name="Freeman G.J."/>
            <person name="Umetsu S.E."/>
            <person name="DeKruyff R.H."/>
            <person name="Umetsu D.T."/>
            <person name="Kaplan G.G."/>
        </authorList>
    </citation>
    <scope>INTERACTION WITH IMMUNOGLOBULIN A</scope>
</reference>
<reference key="6">
    <citation type="journal article" date="2007" name="J. Pathol.">
        <title>Tubular kidney injury molecule-1 (KIM-1) in human renal disease.</title>
        <authorList>
            <person name="van Timmeren M.M."/>
            <person name="van den Heuvel M.C."/>
            <person name="Bailly V."/>
            <person name="Bakker S.J."/>
            <person name="van Goor H."/>
            <person name="Stegeman C.A."/>
        </authorList>
    </citation>
    <scope>FUNCTION</scope>
    <scope>INDUCTION</scope>
</reference>
<reference key="7">
    <citation type="journal article" date="2008" name="Proc. Natl. Acad. Sci. U.S.A.">
        <title>A quantitative atlas of mitotic phosphorylation.</title>
        <authorList>
            <person name="Dephoure N."/>
            <person name="Zhou C."/>
            <person name="Villen J."/>
            <person name="Beausoleil S.A."/>
            <person name="Bakalarski C.E."/>
            <person name="Elledge S.J."/>
            <person name="Gygi S.P."/>
        </authorList>
    </citation>
    <scope>IDENTIFICATION BY MASS SPECTROMETRY [LARGE SCALE ANALYSIS]</scope>
    <source>
        <tissue>Cervix carcinoma</tissue>
    </source>
</reference>
<reference key="8">
    <citation type="journal article" date="2011" name="Proc. Natl. Acad. Sci. U.S.A.">
        <title>T-cell immunoglobulin and mucin domain 1 (TIM-1) is a receptor for Zaire Ebolavirus and Lake Victoria Marburgvirus.</title>
        <authorList>
            <person name="Kondratowicz A.S."/>
            <person name="Lennemann N.J."/>
            <person name="Sinn P.L."/>
            <person name="Davey R.A."/>
            <person name="Hunt C.L."/>
            <person name="Moller-Tank S."/>
            <person name="Meyerholz D.K."/>
            <person name="Rennert P."/>
            <person name="Mullins R.F."/>
            <person name="Brindley M."/>
            <person name="Sandersfeld L.M."/>
            <person name="Quinn K."/>
            <person name="Weller M."/>
            <person name="McCray P.B. Jr."/>
            <person name="Chiorini J."/>
            <person name="Maury W."/>
        </authorList>
    </citation>
    <scope>FUNCTION (MICROBIAL INFECTION)</scope>
</reference>
<reference key="9">
    <citation type="journal article" date="2012" name="Cell Host Microbe">
        <title>The TIM and TAM families of phosphatidylserine receptors mediate dengue virus entry.</title>
        <authorList>
            <person name="Meertens L."/>
            <person name="Carnec X."/>
            <person name="Lecoin M.P."/>
            <person name="Ramdasi R."/>
            <person name="Guivel-Benhassine F."/>
            <person name="Lew E."/>
            <person name="Lemke G."/>
            <person name="Schwartz O."/>
            <person name="Amara A."/>
        </authorList>
    </citation>
    <scope>FUNCTION (MICROBIAL INFECTION)</scope>
</reference>
<reference key="10">
    <citation type="journal article" date="2014" name="Immunity">
        <title>TIM-1 glycoprotein binds the adhesion receptor P-selectin and mediates T cell trafficking during inflammation and autoimmunity.</title>
        <authorList>
            <person name="Angiari S."/>
            <person name="Donnarumma T."/>
            <person name="Rossi B."/>
            <person name="Dusi S."/>
            <person name="Pietronigro E."/>
            <person name="Zenaro E."/>
            <person name="Della Bianca V."/>
            <person name="Toffali L."/>
            <person name="Piacentino G."/>
            <person name="Budui S."/>
            <person name="Rennert P."/>
            <person name="Xiao S."/>
            <person name="Laudanna C."/>
            <person name="Casasnovas J.M."/>
            <person name="Kuchroo V.K."/>
            <person name="Constantin G."/>
        </authorList>
    </citation>
    <scope>FUNCTION</scope>
    <scope>INTERACTION WITH SELPLG</scope>
</reference>
<reference key="11">
    <citation type="journal article" date="2018" name="J. Virol.">
        <title>HAVCR1 (CD365) and its mouse ortholog are functional hepatitis A virus (HAV) cellular receptors that mediate HAV infection.</title>
        <authorList>
            <person name="Costafreda M.I."/>
            <person name="Kaplan G."/>
        </authorList>
    </citation>
    <scope>FUNCTION (MICROBIAL INFECTION)</scope>
</reference>
<reference key="12">
    <citation type="journal article" date="2018" name="Cell Rep.">
        <title>TIM-1 Ubiquitination Mediates Dengue Virus Entry.</title>
        <authorList>
            <person name="Dejarnac O."/>
            <person name="Hafirassou M.L."/>
            <person name="Chazal M."/>
            <person name="Versapuech M."/>
            <person name="Gaillard J."/>
            <person name="Perera-Lecoin M."/>
            <person name="Umana-Diaz C."/>
            <person name="Bonnet-Madin L."/>
            <person name="Carnec X."/>
            <person name="Tinevez J.Y."/>
            <person name="Delaugerre C."/>
            <person name="Schwartz O."/>
            <person name="Roingeard P."/>
            <person name="Jouvenet N."/>
            <person name="Berlioz-Torrent C."/>
            <person name="Meertens L."/>
            <person name="Amara A."/>
        </authorList>
    </citation>
    <scope>FUNCTION (MICROBIAL INFECTION)</scope>
    <scope>UBIQUITINATION AT LYS-338 AND LYS-346</scope>
    <scope>INTERACTION WITH STAM</scope>
    <scope>MUTAGENESIS OF LYS-338 AND LYS-346</scope>
    <scope>SUBCELLULAR LOCATION</scope>
</reference>
<reference key="13">
    <citation type="journal article" date="2020" name="Nature">
        <title>Envelope protein ubiquitination drives entry and pathogenesis of Zika virus.</title>
        <authorList>
            <person name="Giraldo M.I."/>
            <person name="Xia H."/>
            <person name="Aguilera-Aguirre L."/>
            <person name="Hage A."/>
            <person name="van Tol S."/>
            <person name="Shan C."/>
            <person name="Xie X."/>
            <person name="Sturdevant G.L."/>
            <person name="Robertson S.J."/>
            <person name="McNally K.L."/>
            <person name="Meade-White K."/>
            <person name="Azar S.R."/>
            <person name="Rossi S.L."/>
            <person name="Maury W."/>
            <person name="Woodson M."/>
            <person name="Ramage H."/>
            <person name="Johnson J.R."/>
            <person name="Krogan N.J."/>
            <person name="Morais M.C."/>
            <person name="Best S.M."/>
            <person name="Shi P.Y."/>
            <person name="Rajsbaum R."/>
        </authorList>
    </citation>
    <scope>FUNCTION (MICROBIAL INFECTION)</scope>
    <scope>INTERACTION WITH ZIKA VIRUS ENVELOPE PROTEIN E (MICROBIAL INFECTION)</scope>
</reference>
<reference key="14">
    <citation type="journal article" date="2021" name="Cells">
        <title>The Phosphatidylserine Receptor TIM-1 Enhances Authentic Chikungunya Virus Cell Entry.</title>
        <authorList>
            <person name="Kirui J."/>
            <person name="Abidine Y."/>
            <person name="Lenman A."/>
            <person name="Islam K."/>
            <person name="Gwon Y.D."/>
            <person name="Lasswitz L."/>
            <person name="Evander M."/>
            <person name="Bally M."/>
            <person name="Gerold G."/>
        </authorList>
    </citation>
    <scope>FUNCTION (MICROBIAL INFECTION)</scope>
    <scope>MUTAGENESIS OF ASN-114 AND ASP-115</scope>
</reference>
<reference key="15">
    <citation type="journal article" date="2003" name="Nature">
        <title>Hepatitis A virus link to atopic disease.</title>
        <authorList>
            <person name="McIntire J.J."/>
            <person name="Umetsu S.E."/>
            <person name="Macaubas C."/>
            <person name="Hoyte E.G."/>
            <person name="Cinnioglu C."/>
            <person name="Cavalli-Sforza L.L."/>
            <person name="Barsh G.S."/>
            <person name="Hallmayer J.F."/>
            <person name="Underhill P.A."/>
            <person name="Risch N.J."/>
            <person name="Freeman G.J."/>
            <person name="DeKruyff R.H."/>
            <person name="Umetsu D.T."/>
        </authorList>
    </citation>
    <scope>POLYMORPHISM</scope>
    <scope>VARIANTS 157-PRO--VAL-161 DEL AND THR-200 DEL</scope>
</reference>
<reference key="16">
    <citation type="journal article" date="2015" name="Protein Cell">
        <title>TIM-1 acts a dual-attachment receptor for Ebolavirus by interacting directly with viral GP and the PS on the viral envelope.</title>
        <authorList>
            <person name="Yuan S."/>
            <person name="Cao L."/>
            <person name="Ling H."/>
            <person name="Dang M."/>
            <person name="Sun Y."/>
            <person name="Zhang X."/>
            <person name="Chen Y."/>
            <person name="Zhang L."/>
            <person name="Su D."/>
            <person name="Wang X."/>
            <person name="Rao Z."/>
        </authorList>
    </citation>
    <scope>X-RAY CRYSTALLOGRAPHY (1.30 ANGSTROMS) OF 22-127</scope>
    <scope>FUNCTION (MICROBIAL INFECTION)</scope>
    <scope>INTERACTION WITH EBOLAVIRUS GP PROTEIN (MICROBIAL INFECTION)</scope>
    <scope>DISULFIDE BOND</scope>
</reference>
<keyword id="KW-0002">3D-structure</keyword>
<keyword id="KW-1003">Cell membrane</keyword>
<keyword id="KW-1015">Disulfide bond</keyword>
<keyword id="KW-0325">Glycoprotein</keyword>
<keyword id="KW-1183">Host cell receptor for virus entry</keyword>
<keyword id="KW-0945">Host-virus interaction</keyword>
<keyword id="KW-0393">Immunoglobulin domain</keyword>
<keyword id="KW-1017">Isopeptide bond</keyword>
<keyword id="KW-0472">Membrane</keyword>
<keyword id="KW-1267">Proteomics identification</keyword>
<keyword id="KW-0675">Receptor</keyword>
<keyword id="KW-1185">Reference proteome</keyword>
<keyword id="KW-0677">Repeat</keyword>
<keyword id="KW-0732">Signal</keyword>
<keyword id="KW-0812">Transmembrane</keyword>
<keyword id="KW-1133">Transmembrane helix</keyword>
<keyword id="KW-0832">Ubl conjugation</keyword>
<comment type="function">
    <text evidence="1 6 9">Phosphatidylserine receptor that plays an important functional role in regulatory B-cells homeostasis including generation, expansion and suppressor functions (By similarity). As P-selectin/SELPLG ligand, plays a specialized role in activated but not naive T-cell trafficking during inflammatory responses (PubMed:24703780). Controls thereby T-cell accumulation in the inflamed central nervous system (CNS) and the induction of autoimmune disease (PubMed:24703780). Also regulates expression of various anti-inflammatory cytokines and co-inhibitory ligands including IL10 (By similarity). Acts as a regulator of T-cell proliferation (By similarity). May play a role in kidney injury and repair (PubMed:17471468).</text>
</comment>
<comment type="function">
    <text evidence="11 15">(Microbial infection) Acts as a receptor for Hepatitis A virus.</text>
</comment>
<comment type="function">
    <text evidence="7 10">(Microbial infection) Acts as a receptor for Ebolavirus and Marburg virus by binding exposed phosphatidyl-serine at the surface of virion membrane (PubMed:21536871). Serves as a dual receptor for Ebolavirus by also interacting with envelope glycoprotein GP (PubMed:26487564).</text>
</comment>
<comment type="function">
    <text evidence="8 12">(Microbial infection) Acts as a receptor for Dengue virus by binding exposed phosphatidyl-serine at the surface of virion membrane (PubMed:23084921). TIM1 and Dengue virus are co-internalized during virus entry (PubMed:29742433).</text>
</comment>
<comment type="function">
    <text evidence="13">(Microbial infection) Acts as a receptor for Zika virus by binding to envelope protein E.</text>
</comment>
<comment type="function">
    <text evidence="14">(Microbial infection) Plays a positive role in Chikungunya virus cell entry.</text>
</comment>
<comment type="subunit">
    <text evidence="9 12">Interacts with STAM (PubMed:29742433). Interacts with SELPLG (PubMed:24703780).</text>
</comment>
<comment type="subunit">
    <text evidence="11 15">(Microbial infection) Interacts with hepatitis A virus capsid proteins.</text>
</comment>
<comment type="subunit">
    <text evidence="10">(Microbial infection) Interacts with Ebolavirus envelope glycoprotein GP.</text>
</comment>
<comment type="subunit">
    <text evidence="10">(Microbial infection) Interacts with Zika virus envelope protein E.</text>
</comment>
<comment type="interaction">
    <interactant intactId="EBI-953786">
        <id>Q96D42</id>
    </interactant>
    <interactant intactId="EBI-25474821">
        <id>P0DTC2</id>
        <label>S</label>
    </interactant>
    <organismsDiffer>true</organismsDiffer>
    <experiments>7</experiments>
</comment>
<comment type="subcellular location">
    <subcellularLocation>
        <location evidence="12">Cell membrane</location>
        <topology evidence="16">Single-pass type I membrane protein</topology>
    </subcellularLocation>
</comment>
<comment type="tissue specificity">
    <text evidence="15">Widely expressed, with highest levels in kidney and testis. Expressed by activated CD4+ T-cells during the development of helper T-cells responses.</text>
</comment>
<comment type="induction">
    <text evidence="6">Up-regulated in the kidney in renal diseases (at protein level).</text>
</comment>
<comment type="PTM">
    <text evidence="12">Ubiquitinated at two lysine residues Lys-338 and Lys-346 on its cytoplasmic domain. Ubiquitination promotes receptor endocytosis and target receptors for lysosomal degradation and termination of receptor signaling.</text>
</comment>
<comment type="PTM">
    <text evidence="12">(Microbial infection) Ubiquitination is required for Dengue virus endocytosis.</text>
</comment>
<comment type="polymorphism">
    <text evidence="5">The region containing tandem repeats is polymorphic and the sequence shown here corresponds to the most common allele (PubMed:14534576). An association between hepatitis A virus (HAV) infection and atopic diseases has been observed in individuals with that allele (PubMed:14534576). Allelic variation does not affect HAV-infection rates in Caucasians, Asians and African Americans (PubMed:14534576).</text>
</comment>
<comment type="miscellaneous">
    <text>The extracellular part of the protein can be cleaved and detected in urine and is in correlation with the expression in the kidney.</text>
</comment>
<comment type="similarity">
    <text evidence="16">Belongs to the immunoglobulin superfamily. TIM family.</text>
</comment>
<organism>
    <name type="scientific">Homo sapiens</name>
    <name type="common">Human</name>
    <dbReference type="NCBI Taxonomy" id="9606"/>
    <lineage>
        <taxon>Eukaryota</taxon>
        <taxon>Metazoa</taxon>
        <taxon>Chordata</taxon>
        <taxon>Craniata</taxon>
        <taxon>Vertebrata</taxon>
        <taxon>Euteleostomi</taxon>
        <taxon>Mammalia</taxon>
        <taxon>Eutheria</taxon>
        <taxon>Euarchontoglires</taxon>
        <taxon>Primates</taxon>
        <taxon>Haplorrhini</taxon>
        <taxon>Catarrhini</taxon>
        <taxon>Hominidae</taxon>
        <taxon>Homo</taxon>
    </lineage>
</organism>
<name>HAVR1_HUMAN</name>
<gene>
    <name type="primary">HAVCR1</name>
    <name type="synonym">KIM1</name>
    <name type="synonym">TIM1</name>
    <name type="synonym">TIMD1</name>
</gene>
<evidence type="ECO:0000250" key="1">
    <source>
        <dbReference type="UniProtKB" id="Q5QNS5"/>
    </source>
</evidence>
<evidence type="ECO:0000255" key="2"/>
<evidence type="ECO:0000255" key="3">
    <source>
        <dbReference type="PROSITE-ProRule" id="PRU00114"/>
    </source>
</evidence>
<evidence type="ECO:0000256" key="4">
    <source>
        <dbReference type="SAM" id="MobiDB-lite"/>
    </source>
</evidence>
<evidence type="ECO:0000269" key="5">
    <source>
    </source>
</evidence>
<evidence type="ECO:0000269" key="6">
    <source>
    </source>
</evidence>
<evidence type="ECO:0000269" key="7">
    <source>
    </source>
</evidence>
<evidence type="ECO:0000269" key="8">
    <source>
    </source>
</evidence>
<evidence type="ECO:0000269" key="9">
    <source>
    </source>
</evidence>
<evidence type="ECO:0000269" key="10">
    <source>
    </source>
</evidence>
<evidence type="ECO:0000269" key="11">
    <source>
    </source>
</evidence>
<evidence type="ECO:0000269" key="12">
    <source>
    </source>
</evidence>
<evidence type="ECO:0000269" key="13">
    <source>
    </source>
</evidence>
<evidence type="ECO:0000269" key="14">
    <source>
    </source>
</evidence>
<evidence type="ECO:0000269" key="15">
    <source>
    </source>
</evidence>
<evidence type="ECO:0000305" key="16"/>
<evidence type="ECO:0007744" key="17">
    <source>
        <dbReference type="PDB" id="5DZO"/>
    </source>
</evidence>
<evidence type="ECO:0007829" key="18">
    <source>
        <dbReference type="PDB" id="5DZO"/>
    </source>
</evidence>
<accession>Q96D42</accession>
<accession>O43656</accession>
<sequence length="364" mass="39250">MHPQVVILSLILHLADSVAGSVKVGGEAGPSVTLPCHYSGAVTSMCWNRGSCSLFTCQNGIVWTNGTHVTYRKDTRYKLLGDLSRRDVSLTIENTAVSDSGVYCCRVEHRGWFNDMKITVSLEIVPPKVTTTPIVTTVPTVTTVRTSTTVPTTTTVPMTTVPTTTVPTTMSIPTTTTVLTTMTVSTTTSVPTTTSIPTTTSVPVTTTVSTFVPPMPLPRQNHEPVATSPSSPQPAETHPTTLQGAIRREPTSSPLYSYTTDGNDTVTESSDGLWNNNQTQLFLEHSLLTANTTKGIYAGVCISVLVLLALLGVIIAKKYFFKKEVQQLSVSFSSLQIKALQNAVEKEVQAEDNIYIENSLYATD</sequence>
<protein>
    <recommendedName>
        <fullName>Hepatitis A virus cellular receptor 1</fullName>
        <shortName>HAVcr-1</shortName>
    </recommendedName>
    <alternativeName>
        <fullName>Kidney injury molecule 1</fullName>
        <shortName>KIM-1</shortName>
    </alternativeName>
    <alternativeName>
        <fullName>T-cell immunoglobulin and mucin domain-containing protein 1</fullName>
        <shortName>TIMD-1</shortName>
    </alternativeName>
    <alternativeName>
        <fullName>T-cell immunoglobulin mucin receptor 1</fullName>
        <shortName>TIM</shortName>
        <shortName>TIM-1</shortName>
    </alternativeName>
    <alternativeName>
        <fullName>T-cell membrane protein 1</fullName>
    </alternativeName>
    <cdAntigenName>CD365</cdAntigenName>
</protein>
<proteinExistence type="evidence at protein level"/>
<dbReference type="EMBL" id="AF043724">
    <property type="protein sequence ID" value="AAC39862.1"/>
    <property type="molecule type" value="mRNA"/>
</dbReference>
<dbReference type="EMBL" id="CR457114">
    <property type="protein sequence ID" value="CAG33395.1"/>
    <property type="molecule type" value="mRNA"/>
</dbReference>
<dbReference type="EMBL" id="AC026777">
    <property type="status" value="NOT_ANNOTATED_CDS"/>
    <property type="molecule type" value="Genomic_DNA"/>
</dbReference>
<dbReference type="EMBL" id="BC013325">
    <property type="protein sequence ID" value="AAH13325.1"/>
    <property type="molecule type" value="mRNA"/>
</dbReference>
<dbReference type="CCDS" id="CCDS43392.1"/>
<dbReference type="RefSeq" id="NP_001166864.1">
    <property type="nucleotide sequence ID" value="NM_001173393.3"/>
</dbReference>
<dbReference type="RefSeq" id="NP_001295085.1">
    <property type="nucleotide sequence ID" value="NM_001308156.1"/>
</dbReference>
<dbReference type="RefSeq" id="NP_036338.2">
    <property type="nucleotide sequence ID" value="NM_012206.3"/>
</dbReference>
<dbReference type="RefSeq" id="XP_024301792.1">
    <property type="nucleotide sequence ID" value="XM_024446024.2"/>
</dbReference>
<dbReference type="RefSeq" id="XP_047273052.1">
    <property type="nucleotide sequence ID" value="XM_047417096.1"/>
</dbReference>
<dbReference type="RefSeq" id="XP_047273053.1">
    <property type="nucleotide sequence ID" value="XM_047417097.1"/>
</dbReference>
<dbReference type="PDB" id="5DZO">
    <property type="method" value="X-ray"/>
    <property type="resolution" value="1.30 A"/>
    <property type="chains" value="A=22-127"/>
</dbReference>
<dbReference type="PDB" id="5F70">
    <property type="method" value="X-ray"/>
    <property type="resolution" value="1.80 A"/>
    <property type="chains" value="A=21-123"/>
</dbReference>
<dbReference type="PDBsum" id="5DZO"/>
<dbReference type="PDBsum" id="5F70"/>
<dbReference type="SMR" id="Q96D42"/>
<dbReference type="BioGRID" id="117812">
    <property type="interactions" value="29"/>
</dbReference>
<dbReference type="FunCoup" id="Q96D42">
    <property type="interactions" value="271"/>
</dbReference>
<dbReference type="IntAct" id="Q96D42">
    <property type="interactions" value="5"/>
</dbReference>
<dbReference type="STRING" id="9606.ENSP00000487363"/>
<dbReference type="GlyCosmos" id="Q96D42">
    <property type="glycosylation" value="5 sites, 1 glycan"/>
</dbReference>
<dbReference type="GlyGen" id="Q96D42">
    <property type="glycosylation" value="5 sites, 4 N-linked glycans (1 site), 1 O-linked glycan (1 site)"/>
</dbReference>
<dbReference type="iPTMnet" id="Q96D42"/>
<dbReference type="PhosphoSitePlus" id="Q96D42"/>
<dbReference type="BioMuta" id="HAVCR1"/>
<dbReference type="DMDM" id="73919877"/>
<dbReference type="jPOST" id="Q96D42"/>
<dbReference type="MassIVE" id="Q96D42"/>
<dbReference type="PaxDb" id="9606-ENSP00000344844"/>
<dbReference type="PeptideAtlas" id="Q96D42"/>
<dbReference type="ProteomicsDB" id="76250"/>
<dbReference type="Antibodypedia" id="2353">
    <property type="antibodies" value="1022 antibodies from 37 providers"/>
</dbReference>
<dbReference type="DNASU" id="26762"/>
<dbReference type="Ensembl" id="ENST00000339252.8">
    <property type="protein sequence ID" value="ENSP00000344844.3"/>
    <property type="gene ID" value="ENSG00000113249.14"/>
</dbReference>
<dbReference type="Ensembl" id="ENST00000523175.6">
    <property type="protein sequence ID" value="ENSP00000427898.1"/>
    <property type="gene ID" value="ENSG00000113249.14"/>
</dbReference>
<dbReference type="GeneID" id="26762"/>
<dbReference type="KEGG" id="hsa:26762"/>
<dbReference type="MANE-Select" id="ENST00000523175.6">
    <property type="protein sequence ID" value="ENSP00000427898.1"/>
    <property type="RefSeq nucleotide sequence ID" value="NM_001173393.3"/>
    <property type="RefSeq protein sequence ID" value="NP_001166864.1"/>
</dbReference>
<dbReference type="UCSC" id="uc003lwi.3">
    <property type="organism name" value="human"/>
</dbReference>
<dbReference type="AGR" id="HGNC:17866"/>
<dbReference type="CTD" id="26762"/>
<dbReference type="DisGeNET" id="26762"/>
<dbReference type="GeneCards" id="HAVCR1"/>
<dbReference type="HGNC" id="HGNC:17866">
    <property type="gene designation" value="HAVCR1"/>
</dbReference>
<dbReference type="HPA" id="ENSG00000113249">
    <property type="expression patterns" value="Group enriched (intestine, kidney)"/>
</dbReference>
<dbReference type="MalaCards" id="HAVCR1"/>
<dbReference type="MIM" id="606518">
    <property type="type" value="gene"/>
</dbReference>
<dbReference type="neXtProt" id="NX_Q96D42"/>
<dbReference type="OpenTargets" id="ENSG00000113249"/>
<dbReference type="PharmGKB" id="PA134924567"/>
<dbReference type="VEuPathDB" id="HostDB:ENSG00000113249"/>
<dbReference type="eggNOG" id="ENOG502S454">
    <property type="taxonomic scope" value="Eukaryota"/>
</dbReference>
<dbReference type="GeneTree" id="ENSGT00940000159345"/>
<dbReference type="HOGENOM" id="CLU_047504_2_1_1"/>
<dbReference type="InParanoid" id="Q96D42"/>
<dbReference type="OMA" id="EHSPQMV"/>
<dbReference type="OrthoDB" id="8447307at2759"/>
<dbReference type="PAN-GO" id="Q96D42">
    <property type="GO annotations" value="5 GO annotations based on evolutionary models"/>
</dbReference>
<dbReference type="PhylomeDB" id="Q96D42"/>
<dbReference type="TreeFam" id="TF336163"/>
<dbReference type="PathwayCommons" id="Q96D42"/>
<dbReference type="Reactome" id="R-HSA-9694614">
    <property type="pathway name" value="Attachment and Entry"/>
</dbReference>
<dbReference type="SignaLink" id="Q96D42"/>
<dbReference type="BioGRID-ORCS" id="26762">
    <property type="hits" value="18 hits in 1151 CRISPR screens"/>
</dbReference>
<dbReference type="ChiTaRS" id="HAVCR1">
    <property type="organism name" value="human"/>
</dbReference>
<dbReference type="EvolutionaryTrace" id="Q96D42"/>
<dbReference type="GeneWiki" id="HAVCR1"/>
<dbReference type="GenomeRNAi" id="26762"/>
<dbReference type="Pharos" id="Q96D42">
    <property type="development level" value="Tbio"/>
</dbReference>
<dbReference type="PRO" id="PR:Q96D42"/>
<dbReference type="Proteomes" id="UP000005640">
    <property type="component" value="Chromosome 5"/>
</dbReference>
<dbReference type="RNAct" id="Q96D42">
    <property type="molecule type" value="protein"/>
</dbReference>
<dbReference type="Bgee" id="ENSG00000113249">
    <property type="expression patterns" value="Expressed in male germ line stem cell (sensu Vertebrata) in testis and 88 other cell types or tissues"/>
</dbReference>
<dbReference type="ExpressionAtlas" id="Q96D42">
    <property type="expression patterns" value="baseline and differential"/>
</dbReference>
<dbReference type="GO" id="GO:0009986">
    <property type="term" value="C:cell surface"/>
    <property type="evidence" value="ECO:0000318"/>
    <property type="project" value="GO_Central"/>
</dbReference>
<dbReference type="GO" id="GO:0031514">
    <property type="term" value="C:motile cilium"/>
    <property type="evidence" value="ECO:0000314"/>
    <property type="project" value="CACAO"/>
</dbReference>
<dbReference type="GO" id="GO:0005886">
    <property type="term" value="C:plasma membrane"/>
    <property type="evidence" value="ECO:0007669"/>
    <property type="project" value="UniProtKB-SubCell"/>
</dbReference>
<dbReference type="GO" id="GO:0001786">
    <property type="term" value="F:phosphatidylserine binding"/>
    <property type="evidence" value="ECO:0000318"/>
    <property type="project" value="GO_Central"/>
</dbReference>
<dbReference type="GO" id="GO:0001618">
    <property type="term" value="F:virus receptor activity"/>
    <property type="evidence" value="ECO:0000314"/>
    <property type="project" value="CACAO"/>
</dbReference>
<dbReference type="GO" id="GO:0006911">
    <property type="term" value="P:phagocytosis, engulfment"/>
    <property type="evidence" value="ECO:0000318"/>
    <property type="project" value="GO_Central"/>
</dbReference>
<dbReference type="GO" id="GO:0033005">
    <property type="term" value="P:positive regulation of mast cell activation"/>
    <property type="evidence" value="ECO:0000318"/>
    <property type="project" value="GO_Central"/>
</dbReference>
<dbReference type="FunFam" id="2.60.40.10:FF:000774">
    <property type="entry name" value="Hepatitis A virus cellular receptor 1"/>
    <property type="match status" value="1"/>
</dbReference>
<dbReference type="Gene3D" id="2.60.40.10">
    <property type="entry name" value="Immunoglobulins"/>
    <property type="match status" value="1"/>
</dbReference>
<dbReference type="InterPro" id="IPR007110">
    <property type="entry name" value="Ig-like_dom"/>
</dbReference>
<dbReference type="InterPro" id="IPR036179">
    <property type="entry name" value="Ig-like_dom_sf"/>
</dbReference>
<dbReference type="InterPro" id="IPR013783">
    <property type="entry name" value="Ig-like_fold"/>
</dbReference>
<dbReference type="InterPro" id="IPR003006">
    <property type="entry name" value="Ig/MHC_CS"/>
</dbReference>
<dbReference type="InterPro" id="IPR003599">
    <property type="entry name" value="Ig_sub"/>
</dbReference>
<dbReference type="InterPro" id="IPR013106">
    <property type="entry name" value="Ig_V-set"/>
</dbReference>
<dbReference type="InterPro" id="IPR052331">
    <property type="entry name" value="TIM_domain-containing_protein"/>
</dbReference>
<dbReference type="PANTHER" id="PTHR47009:SF1">
    <property type="entry name" value="HEPATITIS A VIRUS CELLULAR RECEPTOR 1"/>
    <property type="match status" value="1"/>
</dbReference>
<dbReference type="PANTHER" id="PTHR47009">
    <property type="entry name" value="HEPATITIS A VIRUS CELLULAR RECEPTOR 1 HOMOLOG"/>
    <property type="match status" value="1"/>
</dbReference>
<dbReference type="Pfam" id="PF07686">
    <property type="entry name" value="V-set"/>
    <property type="match status" value="1"/>
</dbReference>
<dbReference type="SMART" id="SM00409">
    <property type="entry name" value="IG"/>
    <property type="match status" value="1"/>
</dbReference>
<dbReference type="SUPFAM" id="SSF48726">
    <property type="entry name" value="Immunoglobulin"/>
    <property type="match status" value="1"/>
</dbReference>
<dbReference type="PROSITE" id="PS50835">
    <property type="entry name" value="IG_LIKE"/>
    <property type="match status" value="1"/>
</dbReference>
<dbReference type="PROSITE" id="PS00290">
    <property type="entry name" value="IG_MHC"/>
    <property type="match status" value="1"/>
</dbReference>
<feature type="signal peptide" evidence="2">
    <location>
        <begin position="1"/>
        <end position="20"/>
    </location>
</feature>
<feature type="chain" id="PRO_0000014981" description="Hepatitis A virus cellular receptor 1">
    <location>
        <begin position="21"/>
        <end position="364"/>
    </location>
</feature>
<feature type="topological domain" description="Extracellular" evidence="2">
    <location>
        <begin position="21"/>
        <end position="295"/>
    </location>
</feature>
<feature type="transmembrane region" description="Helical" evidence="2">
    <location>
        <begin position="296"/>
        <end position="316"/>
    </location>
</feature>
<feature type="topological domain" description="Cytoplasmic" evidence="2">
    <location>
        <begin position="317"/>
        <end position="364"/>
    </location>
</feature>
<feature type="domain" description="Ig-like V-type">
    <location>
        <begin position="21"/>
        <end position="121"/>
    </location>
</feature>
<feature type="repeat" description="1">
    <location>
        <begin position="138"/>
        <end position="143"/>
    </location>
</feature>
<feature type="repeat" description="2">
    <location>
        <begin position="144"/>
        <end position="149"/>
    </location>
</feature>
<feature type="repeat" description="3">
    <location>
        <begin position="150"/>
        <end position="155"/>
    </location>
</feature>
<feature type="repeat" description="4">
    <location>
        <begin position="156"/>
        <end position="160"/>
    </location>
</feature>
<feature type="repeat" description="5">
    <location>
        <begin position="161"/>
        <end position="165"/>
    </location>
</feature>
<feature type="repeat" description="6">
    <location>
        <begin position="166"/>
        <end position="171"/>
    </location>
</feature>
<feature type="repeat" description="7">
    <location>
        <begin position="172"/>
        <end position="177"/>
    </location>
</feature>
<feature type="repeat" description="8">
    <location>
        <begin position="178"/>
        <end position="183"/>
    </location>
</feature>
<feature type="repeat" description="9">
    <location>
        <begin position="184"/>
        <end position="189"/>
    </location>
</feature>
<feature type="repeat" description="10">
    <location>
        <begin position="190"/>
        <end position="195"/>
    </location>
</feature>
<feature type="repeat" description="11">
    <location>
        <begin position="196"/>
        <end position="201"/>
    </location>
</feature>
<feature type="repeat" description="12">
    <location>
        <begin position="202"/>
        <end position="207"/>
    </location>
</feature>
<feature type="region of interest" description="12 X 6 AA approximate tandem repeats of V-P-T-T-T-T]">
    <location>
        <begin position="138"/>
        <end position="207"/>
    </location>
</feature>
<feature type="region of interest" description="Disordered" evidence="4">
    <location>
        <begin position="216"/>
        <end position="257"/>
    </location>
</feature>
<feature type="compositionally biased region" description="Polar residues" evidence="4">
    <location>
        <begin position="227"/>
        <end position="243"/>
    </location>
</feature>
<feature type="glycosylation site" description="N-linked (GlcNAc...) asparagine" evidence="2">
    <location>
        <position position="65"/>
    </location>
</feature>
<feature type="glycosylation site" description="N-linked (GlcNAc...) asparagine" evidence="2">
    <location>
        <position position="263"/>
    </location>
</feature>
<feature type="glycosylation site" description="N-linked (GlcNAc...) asparagine" evidence="2">
    <location>
        <position position="277"/>
    </location>
</feature>
<feature type="glycosylation site" description="N-linked (GlcNAc...) asparagine" evidence="2">
    <location>
        <position position="291"/>
    </location>
</feature>
<feature type="disulfide bond" evidence="3 10 17">
    <location>
        <begin position="36"/>
        <end position="105"/>
    </location>
</feature>
<feature type="disulfide bond" evidence="3 10 17">
    <location>
        <begin position="46"/>
        <end position="57"/>
    </location>
</feature>
<feature type="disulfide bond" evidence="3 10 17">
    <location>
        <begin position="52"/>
        <end position="104"/>
    </location>
</feature>
<feature type="cross-link" description="Glycyl lysine isopeptide (Lys-Gly) (interchain with G-Cter in ubiquitin)" evidence="12">
    <location>
        <position position="338"/>
    </location>
</feature>
<feature type="cross-link" description="Glycyl lysine isopeptide (Lys-Gly) (interchain with G-Cter in ubiquitin)" evidence="12">
    <location>
        <position position="346"/>
    </location>
</feature>
<feature type="sequence variant" id="VAR_056080" description="In dbSNP:rs2270922.">
    <original>S</original>
    <variation>L</variation>
    <location>
        <position position="51"/>
    </location>
</feature>
<feature type="sequence variant" id="VAR_081334" evidence="5 15">
    <location>
        <begin position="157"/>
        <end position="161"/>
    </location>
</feature>
<feature type="sequence variant" id="VAR_023323" evidence="5">
    <location>
        <position position="200"/>
    </location>
</feature>
<feature type="mutagenesis site" description="About 60% loss of Chikungunya virus entry." evidence="14">
    <original>N</original>
    <variation>A</variation>
    <location>
        <position position="114"/>
    </location>
</feature>
<feature type="mutagenesis site" description="About 25% loss of Chikungunya virus entry." evidence="14">
    <original>D</original>
    <variation>A</variation>
    <location>
        <position position="115"/>
    </location>
</feature>
<feature type="mutagenesis site" description="About 50% loss of ubiquitination." evidence="12">
    <original>K</original>
    <variation>R</variation>
    <location>
        <position position="338"/>
    </location>
</feature>
<feature type="mutagenesis site" description="Complete loss of ubiquitination; when associated with R-346." evidence="12">
    <original>K</original>
    <variation>R</variation>
    <location>
        <position position="338"/>
    </location>
</feature>
<feature type="mutagenesis site" description="About 50% loss of ubiquitination." evidence="12">
    <original>K</original>
    <variation>R</variation>
    <location>
        <position position="346"/>
    </location>
</feature>
<feature type="mutagenesis site" description="Complete loss of ubiquitination; when associated with R-338." evidence="12">
    <original>K</original>
    <variation>R</variation>
    <location>
        <position position="346"/>
    </location>
</feature>
<feature type="sequence conflict" description="In Ref. 1; AAC39862." evidence="16" ref="1">
    <original>L</original>
    <variation>P</variation>
    <location>
        <position position="179"/>
    </location>
</feature>
<feature type="strand" evidence="18">
    <location>
        <begin position="22"/>
        <end position="30"/>
    </location>
</feature>
<feature type="strand" evidence="18">
    <location>
        <begin position="32"/>
        <end position="34"/>
    </location>
</feature>
<feature type="strand" evidence="18">
    <location>
        <begin position="45"/>
        <end position="50"/>
    </location>
</feature>
<feature type="turn" evidence="18">
    <location>
        <begin position="56"/>
        <end position="59"/>
    </location>
</feature>
<feature type="strand" evidence="18">
    <location>
        <begin position="60"/>
        <end position="64"/>
    </location>
</feature>
<feature type="strand" evidence="18">
    <location>
        <begin position="66"/>
        <end position="74"/>
    </location>
</feature>
<feature type="helix" evidence="18">
    <location>
        <begin position="83"/>
        <end position="85"/>
    </location>
</feature>
<feature type="strand" evidence="18">
    <location>
        <begin position="90"/>
        <end position="94"/>
    </location>
</feature>
<feature type="helix" evidence="18">
    <location>
        <begin position="97"/>
        <end position="99"/>
    </location>
</feature>
<feature type="strand" evidence="18">
    <location>
        <begin position="101"/>
        <end position="107"/>
    </location>
</feature>
<feature type="strand" evidence="18">
    <location>
        <begin position="110"/>
        <end position="113"/>
    </location>
</feature>
<feature type="strand" evidence="18">
    <location>
        <begin position="116"/>
        <end position="125"/>
    </location>
</feature>